<gene>
    <name evidence="1" type="primary">recF</name>
    <name type="ordered locus">CPR_0004</name>
</gene>
<comment type="function">
    <text evidence="1">The RecF protein is involved in DNA metabolism; it is required for DNA replication and normal SOS inducibility. RecF binds preferentially to single-stranded, linear DNA. It also seems to bind ATP.</text>
</comment>
<comment type="subcellular location">
    <subcellularLocation>
        <location evidence="1">Cytoplasm</location>
    </subcellularLocation>
</comment>
<comment type="similarity">
    <text evidence="1">Belongs to the RecF family.</text>
</comment>
<feature type="chain" id="PRO_1000048515" description="DNA replication and repair protein RecF">
    <location>
        <begin position="1"/>
        <end position="361"/>
    </location>
</feature>
<feature type="binding site" evidence="1">
    <location>
        <begin position="30"/>
        <end position="37"/>
    </location>
    <ligand>
        <name>ATP</name>
        <dbReference type="ChEBI" id="CHEBI:30616"/>
    </ligand>
</feature>
<organism>
    <name type="scientific">Clostridium perfringens (strain SM101 / Type A)</name>
    <dbReference type="NCBI Taxonomy" id="289380"/>
    <lineage>
        <taxon>Bacteria</taxon>
        <taxon>Bacillati</taxon>
        <taxon>Bacillota</taxon>
        <taxon>Clostridia</taxon>
        <taxon>Eubacteriales</taxon>
        <taxon>Clostridiaceae</taxon>
        <taxon>Clostridium</taxon>
    </lineage>
</organism>
<name>RECF_CLOPS</name>
<dbReference type="EMBL" id="CP000312">
    <property type="protein sequence ID" value="ABG86190.1"/>
    <property type="molecule type" value="Genomic_DNA"/>
</dbReference>
<dbReference type="RefSeq" id="WP_003450989.1">
    <property type="nucleotide sequence ID" value="NC_008262.1"/>
</dbReference>
<dbReference type="SMR" id="Q0SWY1"/>
<dbReference type="GeneID" id="93000721"/>
<dbReference type="KEGG" id="cpr:CPR_0004"/>
<dbReference type="Proteomes" id="UP000001824">
    <property type="component" value="Chromosome"/>
</dbReference>
<dbReference type="GO" id="GO:0005737">
    <property type="term" value="C:cytoplasm"/>
    <property type="evidence" value="ECO:0007669"/>
    <property type="project" value="UniProtKB-SubCell"/>
</dbReference>
<dbReference type="GO" id="GO:0005524">
    <property type="term" value="F:ATP binding"/>
    <property type="evidence" value="ECO:0007669"/>
    <property type="project" value="UniProtKB-UniRule"/>
</dbReference>
<dbReference type="GO" id="GO:0003697">
    <property type="term" value="F:single-stranded DNA binding"/>
    <property type="evidence" value="ECO:0007669"/>
    <property type="project" value="UniProtKB-UniRule"/>
</dbReference>
<dbReference type="GO" id="GO:0006260">
    <property type="term" value="P:DNA replication"/>
    <property type="evidence" value="ECO:0007669"/>
    <property type="project" value="UniProtKB-UniRule"/>
</dbReference>
<dbReference type="GO" id="GO:0000731">
    <property type="term" value="P:DNA synthesis involved in DNA repair"/>
    <property type="evidence" value="ECO:0007669"/>
    <property type="project" value="TreeGrafter"/>
</dbReference>
<dbReference type="GO" id="GO:0006302">
    <property type="term" value="P:double-strand break repair"/>
    <property type="evidence" value="ECO:0007669"/>
    <property type="project" value="TreeGrafter"/>
</dbReference>
<dbReference type="GO" id="GO:0009432">
    <property type="term" value="P:SOS response"/>
    <property type="evidence" value="ECO:0007669"/>
    <property type="project" value="UniProtKB-UniRule"/>
</dbReference>
<dbReference type="CDD" id="cd03242">
    <property type="entry name" value="ABC_RecF"/>
    <property type="match status" value="1"/>
</dbReference>
<dbReference type="Gene3D" id="3.40.50.300">
    <property type="entry name" value="P-loop containing nucleotide triphosphate hydrolases"/>
    <property type="match status" value="1"/>
</dbReference>
<dbReference type="Gene3D" id="1.20.1050.90">
    <property type="entry name" value="RecF/RecN/SMC, N-terminal domain"/>
    <property type="match status" value="1"/>
</dbReference>
<dbReference type="HAMAP" id="MF_00365">
    <property type="entry name" value="RecF"/>
    <property type="match status" value="1"/>
</dbReference>
<dbReference type="InterPro" id="IPR001238">
    <property type="entry name" value="DNA-binding_RecF"/>
</dbReference>
<dbReference type="InterPro" id="IPR018078">
    <property type="entry name" value="DNA-binding_RecF_CS"/>
</dbReference>
<dbReference type="InterPro" id="IPR027417">
    <property type="entry name" value="P-loop_NTPase"/>
</dbReference>
<dbReference type="InterPro" id="IPR003395">
    <property type="entry name" value="RecF/RecN/SMC_N"/>
</dbReference>
<dbReference type="InterPro" id="IPR042174">
    <property type="entry name" value="RecF_2"/>
</dbReference>
<dbReference type="NCBIfam" id="TIGR00611">
    <property type="entry name" value="recf"/>
    <property type="match status" value="1"/>
</dbReference>
<dbReference type="PANTHER" id="PTHR32182">
    <property type="entry name" value="DNA REPLICATION AND REPAIR PROTEIN RECF"/>
    <property type="match status" value="1"/>
</dbReference>
<dbReference type="PANTHER" id="PTHR32182:SF0">
    <property type="entry name" value="DNA REPLICATION AND REPAIR PROTEIN RECF"/>
    <property type="match status" value="1"/>
</dbReference>
<dbReference type="Pfam" id="PF02463">
    <property type="entry name" value="SMC_N"/>
    <property type="match status" value="1"/>
</dbReference>
<dbReference type="SUPFAM" id="SSF52540">
    <property type="entry name" value="P-loop containing nucleoside triphosphate hydrolases"/>
    <property type="match status" value="1"/>
</dbReference>
<dbReference type="PROSITE" id="PS00617">
    <property type="entry name" value="RECF_1"/>
    <property type="match status" value="1"/>
</dbReference>
<dbReference type="PROSITE" id="PS00618">
    <property type="entry name" value="RECF_2"/>
    <property type="match status" value="1"/>
</dbReference>
<sequence length="361" mass="42215">MYIKSLQLINYRNYENLSIKLCPNVNVFIGDNAQGKTNVIEAIYYCGFAKSHRTNRDKELIEWNKDRAFIRLDVHKDRLDKIIDVNILKDGKKAISINSIKISKIGELIGTFNVVMFSPEDLKIVKESPGIRRRFIDMELSQLNKRYYHNLVQYNKVLHERNLVLKNKNINEEMLDIYDIQLAQYGENIIKTRLKYIEQLNKYSKEIHKEITSGKEEIEFKYISTVKDLDNIKDSMIKLLEQNRKKDIDKRATSIGPHRDDFNIYLNNIDAKIYGSQGQQRTSVLTIKFASLKIIKEITGEYPVLLLDDVLSELDFNRKRYVLTSIKNIQTVITCTGIEDLTSYLDENSKVFRVINGRIQC</sequence>
<proteinExistence type="inferred from homology"/>
<keyword id="KW-0067">ATP-binding</keyword>
<keyword id="KW-0963">Cytoplasm</keyword>
<keyword id="KW-0227">DNA damage</keyword>
<keyword id="KW-0234">DNA repair</keyword>
<keyword id="KW-0235">DNA replication</keyword>
<keyword id="KW-0238">DNA-binding</keyword>
<keyword id="KW-0547">Nucleotide-binding</keyword>
<keyword id="KW-0742">SOS response</keyword>
<protein>
    <recommendedName>
        <fullName evidence="1">DNA replication and repair protein RecF</fullName>
    </recommendedName>
</protein>
<accession>Q0SWY1</accession>
<reference key="1">
    <citation type="journal article" date="2006" name="Genome Res.">
        <title>Skewed genomic variability in strains of the toxigenic bacterial pathogen, Clostridium perfringens.</title>
        <authorList>
            <person name="Myers G.S.A."/>
            <person name="Rasko D.A."/>
            <person name="Cheung J.K."/>
            <person name="Ravel J."/>
            <person name="Seshadri R."/>
            <person name="DeBoy R.T."/>
            <person name="Ren Q."/>
            <person name="Varga J."/>
            <person name="Awad M.M."/>
            <person name="Brinkac L.M."/>
            <person name="Daugherty S.C."/>
            <person name="Haft D.H."/>
            <person name="Dodson R.J."/>
            <person name="Madupu R."/>
            <person name="Nelson W.C."/>
            <person name="Rosovitz M.J."/>
            <person name="Sullivan S.A."/>
            <person name="Khouri H."/>
            <person name="Dimitrov G.I."/>
            <person name="Watkins K.L."/>
            <person name="Mulligan S."/>
            <person name="Benton J."/>
            <person name="Radune D."/>
            <person name="Fisher D.J."/>
            <person name="Atkins H.S."/>
            <person name="Hiscox T."/>
            <person name="Jost B.H."/>
            <person name="Billington S.J."/>
            <person name="Songer J.G."/>
            <person name="McClane B.A."/>
            <person name="Titball R.W."/>
            <person name="Rood J.I."/>
            <person name="Melville S.B."/>
            <person name="Paulsen I.T."/>
        </authorList>
    </citation>
    <scope>NUCLEOTIDE SEQUENCE [LARGE SCALE GENOMIC DNA]</scope>
    <source>
        <strain>SM101 / Type A</strain>
    </source>
</reference>
<evidence type="ECO:0000255" key="1">
    <source>
        <dbReference type="HAMAP-Rule" id="MF_00365"/>
    </source>
</evidence>